<evidence type="ECO:0000250" key="1"/>
<evidence type="ECO:0000305" key="2"/>
<keyword id="KW-0119">Carbohydrate metabolism</keyword>
<keyword id="KW-0548">Nucleotidyltransferase</keyword>
<keyword id="KW-0808">Transferase</keyword>
<comment type="function">
    <text evidence="1">Catalyzes the formation of UDP-glucose from glucose-1-phosphate and UTP. This is an intermediate step in the biosynthesis of diglucosyl-diacylglycerol (Glc2-DAG), i.e. a glycolipid found in the membrane, which is also used as a membrane anchor for lipoteichoic acid (LTA) (By similarity).</text>
</comment>
<comment type="catalytic activity">
    <reaction>
        <text>alpha-D-glucose 1-phosphate + UTP + H(+) = UDP-alpha-D-glucose + diphosphate</text>
        <dbReference type="Rhea" id="RHEA:19889"/>
        <dbReference type="ChEBI" id="CHEBI:15378"/>
        <dbReference type="ChEBI" id="CHEBI:33019"/>
        <dbReference type="ChEBI" id="CHEBI:46398"/>
        <dbReference type="ChEBI" id="CHEBI:58601"/>
        <dbReference type="ChEBI" id="CHEBI:58885"/>
        <dbReference type="EC" id="2.7.7.9"/>
    </reaction>
</comment>
<comment type="pathway">
    <text>Glycolipid metabolism; diglucosyl-diacylglycerol biosynthesis.</text>
</comment>
<comment type="similarity">
    <text evidence="2">Belongs to the UDPGP type 2 family.</text>
</comment>
<protein>
    <recommendedName>
        <fullName>UTP--glucose-1-phosphate uridylyltransferase</fullName>
        <ecNumber>2.7.7.9</ecNumber>
    </recommendedName>
    <alternativeName>
        <fullName>Alpha-D-glucosyl-1-phosphate uridylyltransferase</fullName>
    </alternativeName>
    <alternativeName>
        <fullName>UDP-glucose pyrophosphorylase</fullName>
        <shortName>UDPGP</shortName>
    </alternativeName>
    <alternativeName>
        <fullName>Uridine diphosphoglucose pyrophosphorylase</fullName>
    </alternativeName>
</protein>
<reference key="1">
    <citation type="journal article" date="2005" name="J. Bacteriol.">
        <title>Whole-genome sequencing of Staphylococcus haemolyticus uncovers the extreme plasticity of its genome and the evolution of human-colonizing staphylococcal species.</title>
        <authorList>
            <person name="Takeuchi F."/>
            <person name="Watanabe S."/>
            <person name="Baba T."/>
            <person name="Yuzawa H."/>
            <person name="Ito T."/>
            <person name="Morimoto Y."/>
            <person name="Kuroda M."/>
            <person name="Cui L."/>
            <person name="Takahashi M."/>
            <person name="Ankai A."/>
            <person name="Baba S."/>
            <person name="Fukui S."/>
            <person name="Lee J.C."/>
            <person name="Hiramatsu K."/>
        </authorList>
    </citation>
    <scope>NUCLEOTIDE SEQUENCE [LARGE SCALE GENOMIC DNA]</scope>
    <source>
        <strain>JCSC1435</strain>
    </source>
</reference>
<gene>
    <name type="primary">gtaB</name>
    <name type="ordered locus">SH0579</name>
</gene>
<dbReference type="EC" id="2.7.7.9"/>
<dbReference type="EMBL" id="AP006716">
    <property type="protein sequence ID" value="BAE03888.1"/>
    <property type="molecule type" value="Genomic_DNA"/>
</dbReference>
<dbReference type="SMR" id="Q4L8Y7"/>
<dbReference type="KEGG" id="sha:SH0579"/>
<dbReference type="eggNOG" id="COG1210">
    <property type="taxonomic scope" value="Bacteria"/>
</dbReference>
<dbReference type="HOGENOM" id="CLU_029499_1_2_9"/>
<dbReference type="OrthoDB" id="9803871at2"/>
<dbReference type="UniPathway" id="UPA00894"/>
<dbReference type="Proteomes" id="UP000000543">
    <property type="component" value="Chromosome"/>
</dbReference>
<dbReference type="GO" id="GO:0003983">
    <property type="term" value="F:UTP:glucose-1-phosphate uridylyltransferase activity"/>
    <property type="evidence" value="ECO:0007669"/>
    <property type="project" value="UniProtKB-EC"/>
</dbReference>
<dbReference type="GO" id="GO:0009246">
    <property type="term" value="P:enterobacterial common antigen biosynthetic process"/>
    <property type="evidence" value="ECO:0007669"/>
    <property type="project" value="UniProtKB-UniPathway"/>
</dbReference>
<dbReference type="GO" id="GO:0006011">
    <property type="term" value="P:UDP-alpha-D-glucose metabolic process"/>
    <property type="evidence" value="ECO:0007669"/>
    <property type="project" value="InterPro"/>
</dbReference>
<dbReference type="CDD" id="cd02541">
    <property type="entry name" value="UGPase_prokaryotic"/>
    <property type="match status" value="1"/>
</dbReference>
<dbReference type="Gene3D" id="3.90.550.10">
    <property type="entry name" value="Spore Coat Polysaccharide Biosynthesis Protein SpsA, Chain A"/>
    <property type="match status" value="1"/>
</dbReference>
<dbReference type="InterPro" id="IPR005771">
    <property type="entry name" value="GalU_uridylyltTrfase_bac/arc"/>
</dbReference>
<dbReference type="InterPro" id="IPR005835">
    <property type="entry name" value="NTP_transferase_dom"/>
</dbReference>
<dbReference type="InterPro" id="IPR029044">
    <property type="entry name" value="Nucleotide-diphossugar_trans"/>
</dbReference>
<dbReference type="NCBIfam" id="TIGR01099">
    <property type="entry name" value="galU"/>
    <property type="match status" value="1"/>
</dbReference>
<dbReference type="PANTHER" id="PTHR43197">
    <property type="entry name" value="UTP--GLUCOSE-1-PHOSPHATE URIDYLYLTRANSFERASE"/>
    <property type="match status" value="1"/>
</dbReference>
<dbReference type="PANTHER" id="PTHR43197:SF1">
    <property type="entry name" value="UTP--GLUCOSE-1-PHOSPHATE URIDYLYLTRANSFERASE"/>
    <property type="match status" value="1"/>
</dbReference>
<dbReference type="Pfam" id="PF00483">
    <property type="entry name" value="NTP_transferase"/>
    <property type="match status" value="1"/>
</dbReference>
<dbReference type="SUPFAM" id="SSF53448">
    <property type="entry name" value="Nucleotide-diphospho-sugar transferases"/>
    <property type="match status" value="1"/>
</dbReference>
<name>GTAB_STAHJ</name>
<accession>Q4L8Y7</accession>
<feature type="chain" id="PRO_0000308312" description="UTP--glucose-1-phosphate uridylyltransferase">
    <location>
        <begin position="1"/>
        <end position="288"/>
    </location>
</feature>
<sequence length="288" mass="32677">MKQIKKAIIPAAGLGTRFLPATKAMPKEMLPILDKPTIQYIVEEASRAGIEDIIIVTGKHKRAIEDHFDNQKELEMVLEEKGKDDLLEKVQYSTDLANIFYVRQKEQKGLGHAIHTARQFIGNEPFAVLLGDDIVESETPAIKQLMNVYEETGHSVIGVQEVPESVTHRYGIIDPLEKEGRRYEVKQFVEKPKQGTAPSNLAIMGRYILTPEIFDYLETQKEGAGNEIQLTDAIERMNSDIPVYAYDFDGDRYDVGEKLGFVKTTIEYALKDPKMKDELIKFIKELGF</sequence>
<organism>
    <name type="scientific">Staphylococcus haemolyticus (strain JCSC1435)</name>
    <dbReference type="NCBI Taxonomy" id="279808"/>
    <lineage>
        <taxon>Bacteria</taxon>
        <taxon>Bacillati</taxon>
        <taxon>Bacillota</taxon>
        <taxon>Bacilli</taxon>
        <taxon>Bacillales</taxon>
        <taxon>Staphylococcaceae</taxon>
        <taxon>Staphylococcus</taxon>
    </lineage>
</organism>
<proteinExistence type="inferred from homology"/>